<feature type="chain" id="PRO_0000427547" description="Putative RNA-guided DNA endonuclease MT2953">
    <location>
        <begin position="1"/>
        <end position="460"/>
    </location>
</feature>
<feature type="region of interest" description="Disordered" evidence="2">
    <location>
        <begin position="415"/>
        <end position="460"/>
    </location>
</feature>
<feature type="active site" evidence="1">
    <location>
        <position position="224"/>
    </location>
</feature>
<feature type="active site" evidence="1">
    <location>
        <position position="313"/>
    </location>
</feature>
<feature type="active site" evidence="1">
    <location>
        <position position="399"/>
    </location>
</feature>
<feature type="binding site" evidence="1">
    <location>
        <position position="372"/>
    </location>
    <ligand>
        <name>Zn(2+)</name>
        <dbReference type="ChEBI" id="CHEBI:29105"/>
    </ligand>
</feature>
<feature type="binding site" evidence="1">
    <location>
        <position position="375"/>
    </location>
    <ligand>
        <name>Zn(2+)</name>
        <dbReference type="ChEBI" id="CHEBI:29105"/>
    </ligand>
</feature>
<feature type="binding site" evidence="1">
    <location>
        <position position="389"/>
    </location>
    <ligand>
        <name>Zn(2+)</name>
        <dbReference type="ChEBI" id="CHEBI:29105"/>
    </ligand>
</feature>
<feature type="binding site" evidence="1">
    <location>
        <position position="392"/>
    </location>
    <ligand>
        <name>Zn(2+)</name>
        <dbReference type="ChEBI" id="CHEBI:29105"/>
    </ligand>
</feature>
<proteinExistence type="inferred from homology"/>
<reference key="1">
    <citation type="journal article" date="2002" name="J. Bacteriol.">
        <title>Whole-genome comparison of Mycobacterium tuberculosis clinical and laboratory strains.</title>
        <authorList>
            <person name="Fleischmann R.D."/>
            <person name="Alland D."/>
            <person name="Eisen J.A."/>
            <person name="Carpenter L."/>
            <person name="White O."/>
            <person name="Peterson J.D."/>
            <person name="DeBoy R.T."/>
            <person name="Dodson R.J."/>
            <person name="Gwinn M.L."/>
            <person name="Haft D.H."/>
            <person name="Hickey E.K."/>
            <person name="Kolonay J.F."/>
            <person name="Nelson W.C."/>
            <person name="Umayam L.A."/>
            <person name="Ermolaeva M.D."/>
            <person name="Salzberg S.L."/>
            <person name="Delcher A."/>
            <person name="Utterback T.R."/>
            <person name="Weidman J.F."/>
            <person name="Khouri H.M."/>
            <person name="Gill J."/>
            <person name="Mikula A."/>
            <person name="Bishai W."/>
            <person name="Jacobs W.R. Jr."/>
            <person name="Venter J.C."/>
            <person name="Fraser C.M."/>
        </authorList>
    </citation>
    <scope>NUCLEOTIDE SEQUENCE [LARGE SCALE GENOMIC DNA]</scope>
    <source>
        <strain>CDC 1551 / Oshkosh</strain>
    </source>
</reference>
<keyword id="KW-0233">DNA recombination</keyword>
<keyword id="KW-0238">DNA-binding</keyword>
<keyword id="KW-0255">Endonuclease</keyword>
<keyword id="KW-0378">Hydrolase</keyword>
<keyword id="KW-0479">Metal-binding</keyword>
<keyword id="KW-0540">Nuclease</keyword>
<keyword id="KW-1185">Reference proteome</keyword>
<keyword id="KW-0814">Transposable element</keyword>
<keyword id="KW-0815">Transposition</keyword>
<keyword id="KW-0862">Zinc</keyword>
<name>Y2885_MYCTO</name>
<organism>
    <name type="scientific">Mycobacterium tuberculosis (strain CDC 1551 / Oshkosh)</name>
    <dbReference type="NCBI Taxonomy" id="83331"/>
    <lineage>
        <taxon>Bacteria</taxon>
        <taxon>Bacillati</taxon>
        <taxon>Actinomycetota</taxon>
        <taxon>Actinomycetes</taxon>
        <taxon>Mycobacteriales</taxon>
        <taxon>Mycobacteriaceae</taxon>
        <taxon>Mycobacterium</taxon>
        <taxon>Mycobacterium tuberculosis complex</taxon>
    </lineage>
</organism>
<comment type="function">
    <text evidence="1">An RNA-guided dsDNA endonuclease. When guided by an RNA derived from the right-end element of its insertion sequence element (IS), cleaves DNA downstream of the transposon-associated motif (TAM). Cleaves supercoiled and linear DNA in a staggered manner 15-21 bases from the TAM yielding 5'-overhangs. Binds reRNA, an approximately 150 nucleotide base sRNA derived from the 3' end of its own gene, the right end (RE) of the insertion sequence (IS) plus sequence downstream of the IS.</text>
</comment>
<comment type="similarity">
    <text evidence="3">In the N-terminal section; belongs to the transposase 2 family.</text>
</comment>
<comment type="similarity">
    <text evidence="3">In the C-terminal section; belongs to the transposase 35 family.</text>
</comment>
<accession>P9WL36</accession>
<accession>L0TDU6</accession>
<accession>Q10809</accession>
<gene>
    <name type="ordered locus">MT2953</name>
</gene>
<evidence type="ECO:0000250" key="1">
    <source>
        <dbReference type="UniProtKB" id="Q7DF80"/>
    </source>
</evidence>
<evidence type="ECO:0000256" key="2">
    <source>
        <dbReference type="SAM" id="MobiDB-lite"/>
    </source>
</evidence>
<evidence type="ECO:0000305" key="3"/>
<sequence>MMARLKVPEGWCVQAFRFTLNPTQTQAASLARHFGARRKAFNWTVTALKADIKAWRADGTESAKPSLRVLRKRWNTVKDQVCVNAQTGQVWWPECSKEAYADGIAGAVDAYWNWQSCRAGKRAGKTVGVPRFKKKGRDADRVCFTTGAMRVEPDRRHLTLPVIGTIRTYENTRRVERLIAKGRARVLAITVRRNGTRLDASVRVLVQRPQQRRVALPDSRVGVDVGVRRLATVADAEGTVLEQVPNPRPLDAALRGLRRVSRARSRCTKGSRRYCERTTELSRLHRRVNDVRTHHLHVLTTRLAKTHGRIVVEGLDAAGMLRQKGLPGARARRRALSDAALATPRRHLSYKTGWYGSSLVVADRWFPSSKTCHACRHVQDIGWDEKWQCDGCSITHQRDDNAAINLARYEEPPSVVGPVGAAVKRGADRKTGPGPAGGREARKATGHPAGEQPRDGVQVK</sequence>
<protein>
    <recommendedName>
        <fullName evidence="1">Putative RNA-guided DNA endonuclease MT2953</fullName>
        <ecNumber evidence="1">3.1.21.-</ecNumber>
    </recommendedName>
</protein>
<dbReference type="EC" id="3.1.21.-" evidence="1"/>
<dbReference type="EMBL" id="AE000516">
    <property type="protein sequence ID" value="AAK47278.1"/>
    <property type="molecule type" value="Genomic_DNA"/>
</dbReference>
<dbReference type="PIR" id="H70924">
    <property type="entry name" value="H70924"/>
</dbReference>
<dbReference type="SMR" id="P9WL36"/>
<dbReference type="KEGG" id="mtc:MT2953"/>
<dbReference type="PATRIC" id="fig|83331.31.peg.3190"/>
<dbReference type="HOGENOM" id="CLU_032903_2_1_11"/>
<dbReference type="Proteomes" id="UP000001020">
    <property type="component" value="Chromosome"/>
</dbReference>
<dbReference type="GO" id="GO:0003677">
    <property type="term" value="F:DNA binding"/>
    <property type="evidence" value="ECO:0007669"/>
    <property type="project" value="UniProtKB-KW"/>
</dbReference>
<dbReference type="GO" id="GO:0004519">
    <property type="term" value="F:endonuclease activity"/>
    <property type="evidence" value="ECO:0007669"/>
    <property type="project" value="UniProtKB-KW"/>
</dbReference>
<dbReference type="GO" id="GO:0046872">
    <property type="term" value="F:metal ion binding"/>
    <property type="evidence" value="ECO:0007669"/>
    <property type="project" value="UniProtKB-KW"/>
</dbReference>
<dbReference type="GO" id="GO:0006310">
    <property type="term" value="P:DNA recombination"/>
    <property type="evidence" value="ECO:0007669"/>
    <property type="project" value="UniProtKB-KW"/>
</dbReference>
<dbReference type="GO" id="GO:0032196">
    <property type="term" value="P:transposition"/>
    <property type="evidence" value="ECO:0007669"/>
    <property type="project" value="UniProtKB-KW"/>
</dbReference>
<dbReference type="InterPro" id="IPR010095">
    <property type="entry name" value="Cas12f1-like_TNB"/>
</dbReference>
<dbReference type="InterPro" id="IPR053470">
    <property type="entry name" value="RNA-guided_DNA_endonuclease"/>
</dbReference>
<dbReference type="InterPro" id="IPR001959">
    <property type="entry name" value="Transposase"/>
</dbReference>
<dbReference type="InterPro" id="IPR021027">
    <property type="entry name" value="Transposase_put_HTH"/>
</dbReference>
<dbReference type="NCBIfam" id="NF040570">
    <property type="entry name" value="guided_TnpB"/>
    <property type="match status" value="1"/>
</dbReference>
<dbReference type="NCBIfam" id="NF038280">
    <property type="entry name" value="IS607_TnpB"/>
    <property type="match status" value="1"/>
</dbReference>
<dbReference type="Pfam" id="PF07282">
    <property type="entry name" value="Cas12f1-like_TNB"/>
    <property type="match status" value="1"/>
</dbReference>
<dbReference type="Pfam" id="PF12323">
    <property type="entry name" value="HTH_OrfB_IS605"/>
    <property type="match status" value="1"/>
</dbReference>
<dbReference type="Pfam" id="PF01385">
    <property type="entry name" value="OrfB_IS605"/>
    <property type="match status" value="1"/>
</dbReference>